<feature type="chain" id="PRO_1000148881" description="23S rRNA (uracil(1939)-C(5))-methyltransferase RlmD">
    <location>
        <begin position="1"/>
        <end position="450"/>
    </location>
</feature>
<feature type="domain" description="TRAM" evidence="1">
    <location>
        <begin position="12"/>
        <end position="70"/>
    </location>
</feature>
<feature type="active site" description="Nucleophile" evidence="1">
    <location>
        <position position="406"/>
    </location>
</feature>
<feature type="binding site" evidence="1">
    <location>
        <position position="83"/>
    </location>
    <ligand>
        <name>[4Fe-4S] cluster</name>
        <dbReference type="ChEBI" id="CHEBI:49883"/>
    </ligand>
</feature>
<feature type="binding site" evidence="1">
    <location>
        <position position="89"/>
    </location>
    <ligand>
        <name>[4Fe-4S] cluster</name>
        <dbReference type="ChEBI" id="CHEBI:49883"/>
    </ligand>
</feature>
<feature type="binding site" evidence="1">
    <location>
        <position position="92"/>
    </location>
    <ligand>
        <name>[4Fe-4S] cluster</name>
        <dbReference type="ChEBI" id="CHEBI:49883"/>
    </ligand>
</feature>
<feature type="binding site" evidence="1">
    <location>
        <position position="171"/>
    </location>
    <ligand>
        <name>[4Fe-4S] cluster</name>
        <dbReference type="ChEBI" id="CHEBI:49883"/>
    </ligand>
</feature>
<feature type="binding site" evidence="1">
    <location>
        <position position="283"/>
    </location>
    <ligand>
        <name>S-adenosyl-L-methionine</name>
        <dbReference type="ChEBI" id="CHEBI:59789"/>
    </ligand>
</feature>
<feature type="binding site" evidence="1">
    <location>
        <position position="312"/>
    </location>
    <ligand>
        <name>S-adenosyl-L-methionine</name>
        <dbReference type="ChEBI" id="CHEBI:59789"/>
    </ligand>
</feature>
<feature type="binding site" evidence="1">
    <location>
        <position position="317"/>
    </location>
    <ligand>
        <name>S-adenosyl-L-methionine</name>
        <dbReference type="ChEBI" id="CHEBI:59789"/>
    </ligand>
</feature>
<feature type="binding site" evidence="1">
    <location>
        <position position="333"/>
    </location>
    <ligand>
        <name>S-adenosyl-L-methionine</name>
        <dbReference type="ChEBI" id="CHEBI:59789"/>
    </ligand>
</feature>
<feature type="binding site" evidence="1">
    <location>
        <position position="360"/>
    </location>
    <ligand>
        <name>S-adenosyl-L-methionine</name>
        <dbReference type="ChEBI" id="CHEBI:59789"/>
    </ligand>
</feature>
<feature type="binding site" evidence="1">
    <location>
        <position position="380"/>
    </location>
    <ligand>
        <name>S-adenosyl-L-methionine</name>
        <dbReference type="ChEBI" id="CHEBI:59789"/>
    </ligand>
</feature>
<protein>
    <recommendedName>
        <fullName evidence="1">23S rRNA (uracil(1939)-C(5))-methyltransferase RlmD</fullName>
        <ecNumber evidence="1">2.1.1.190</ecNumber>
    </recommendedName>
    <alternativeName>
        <fullName evidence="1">23S rRNA(m5U1939)-methyltransferase</fullName>
    </alternativeName>
</protein>
<proteinExistence type="inferred from homology"/>
<reference key="1">
    <citation type="submission" date="2008-12" db="EMBL/GenBank/DDBJ databases">
        <title>Complete sequence of chromosome of Shewanella baltica OS223.</title>
        <authorList>
            <consortium name="US DOE Joint Genome Institute"/>
            <person name="Lucas S."/>
            <person name="Copeland A."/>
            <person name="Lapidus A."/>
            <person name="Glavina del Rio T."/>
            <person name="Dalin E."/>
            <person name="Tice H."/>
            <person name="Bruce D."/>
            <person name="Goodwin L."/>
            <person name="Pitluck S."/>
            <person name="Chertkov O."/>
            <person name="Meincke L."/>
            <person name="Brettin T."/>
            <person name="Detter J.C."/>
            <person name="Han C."/>
            <person name="Kuske C.R."/>
            <person name="Larimer F."/>
            <person name="Land M."/>
            <person name="Hauser L."/>
            <person name="Kyrpides N."/>
            <person name="Ovchinnikova G."/>
            <person name="Brettar I."/>
            <person name="Rodrigues J."/>
            <person name="Konstantinidis K."/>
            <person name="Tiedje J."/>
        </authorList>
    </citation>
    <scope>NUCLEOTIDE SEQUENCE [LARGE SCALE GENOMIC DNA]</scope>
    <source>
        <strain>OS223</strain>
    </source>
</reference>
<sequence>MAQFFKAKPNSSKQLSAKLSLSVNQLDHLGAGIAQHQGKVVFIPGALPDETVTVQLTEQKKNYARAKLIKVDTPSSERVAPECPHYHTCGGCDLQHMSLSGQREHKEAALLDIMAKFAGAEGGTLSPALTGEGWHYRRRARLATLFDKNTKHLSLGFRAASSSNVVPISQCQVLAKPLSDLIVPFAKLLNQLSAKASLGHLELIAADNGHFAVLRITKALNDKDLAKLSAFAEQHQIHICLQDNEGQFQGVGAELVLPVYQLLDDKAESDAVSLSFTPGNFVQVNGQINKAMVAQAMDWLAPAPDERILDLFCGMGNFSLPLAKMGADVIGVEGVAEMVTQARVNAKANNLDKLTFYHGDLSADLSLEPWMGKIDKLLLDPARAGAFESLQWLKKMKPRKVVYVSCNPASLARDSAVLLERGYRLQQLGLIDMFPQTHHIEAMALFELTK</sequence>
<keyword id="KW-0004">4Fe-4S</keyword>
<keyword id="KW-0408">Iron</keyword>
<keyword id="KW-0411">Iron-sulfur</keyword>
<keyword id="KW-0479">Metal-binding</keyword>
<keyword id="KW-0489">Methyltransferase</keyword>
<keyword id="KW-0698">rRNA processing</keyword>
<keyword id="KW-0949">S-adenosyl-L-methionine</keyword>
<keyword id="KW-0808">Transferase</keyword>
<evidence type="ECO:0000255" key="1">
    <source>
        <dbReference type="HAMAP-Rule" id="MF_01010"/>
    </source>
</evidence>
<accession>B8E8S1</accession>
<name>RLMD_SHEB2</name>
<comment type="function">
    <text evidence="1">Catalyzes the formation of 5-methyl-uridine at position 1939 (m5U1939) in 23S rRNA.</text>
</comment>
<comment type="catalytic activity">
    <reaction evidence="1">
        <text>uridine(1939) in 23S rRNA + S-adenosyl-L-methionine = 5-methyluridine(1939) in 23S rRNA + S-adenosyl-L-homocysteine + H(+)</text>
        <dbReference type="Rhea" id="RHEA:42908"/>
        <dbReference type="Rhea" id="RHEA-COMP:10278"/>
        <dbReference type="Rhea" id="RHEA-COMP:10279"/>
        <dbReference type="ChEBI" id="CHEBI:15378"/>
        <dbReference type="ChEBI" id="CHEBI:57856"/>
        <dbReference type="ChEBI" id="CHEBI:59789"/>
        <dbReference type="ChEBI" id="CHEBI:65315"/>
        <dbReference type="ChEBI" id="CHEBI:74447"/>
        <dbReference type="EC" id="2.1.1.190"/>
    </reaction>
</comment>
<comment type="similarity">
    <text evidence="1">Belongs to the class I-like SAM-binding methyltransferase superfamily. RNA M5U methyltransferase family. RlmD subfamily.</text>
</comment>
<gene>
    <name evidence="1" type="primary">rlmD</name>
    <name type="synonym">rumA</name>
    <name type="ordered locus">Sbal223_1224</name>
</gene>
<organism>
    <name type="scientific">Shewanella baltica (strain OS223)</name>
    <dbReference type="NCBI Taxonomy" id="407976"/>
    <lineage>
        <taxon>Bacteria</taxon>
        <taxon>Pseudomonadati</taxon>
        <taxon>Pseudomonadota</taxon>
        <taxon>Gammaproteobacteria</taxon>
        <taxon>Alteromonadales</taxon>
        <taxon>Shewanellaceae</taxon>
        <taxon>Shewanella</taxon>
    </lineage>
</organism>
<dbReference type="EC" id="2.1.1.190" evidence="1"/>
<dbReference type="EMBL" id="CP001252">
    <property type="protein sequence ID" value="ACK45737.1"/>
    <property type="molecule type" value="Genomic_DNA"/>
</dbReference>
<dbReference type="RefSeq" id="WP_012587094.1">
    <property type="nucleotide sequence ID" value="NC_011663.1"/>
</dbReference>
<dbReference type="SMR" id="B8E8S1"/>
<dbReference type="KEGG" id="sbp:Sbal223_1224"/>
<dbReference type="HOGENOM" id="CLU_014689_8_2_6"/>
<dbReference type="Proteomes" id="UP000002507">
    <property type="component" value="Chromosome"/>
</dbReference>
<dbReference type="GO" id="GO:0051539">
    <property type="term" value="F:4 iron, 4 sulfur cluster binding"/>
    <property type="evidence" value="ECO:0007669"/>
    <property type="project" value="UniProtKB-KW"/>
</dbReference>
<dbReference type="GO" id="GO:0005506">
    <property type="term" value="F:iron ion binding"/>
    <property type="evidence" value="ECO:0007669"/>
    <property type="project" value="UniProtKB-UniRule"/>
</dbReference>
<dbReference type="GO" id="GO:0003723">
    <property type="term" value="F:RNA binding"/>
    <property type="evidence" value="ECO:0007669"/>
    <property type="project" value="InterPro"/>
</dbReference>
<dbReference type="GO" id="GO:0070041">
    <property type="term" value="F:rRNA (uridine-C5-)-methyltransferase activity"/>
    <property type="evidence" value="ECO:0007669"/>
    <property type="project" value="UniProtKB-UniRule"/>
</dbReference>
<dbReference type="GO" id="GO:0070475">
    <property type="term" value="P:rRNA base methylation"/>
    <property type="evidence" value="ECO:0007669"/>
    <property type="project" value="TreeGrafter"/>
</dbReference>
<dbReference type="CDD" id="cd02440">
    <property type="entry name" value="AdoMet_MTases"/>
    <property type="match status" value="1"/>
</dbReference>
<dbReference type="FunFam" id="3.40.50.150:FF:000009">
    <property type="entry name" value="23S rRNA (Uracil(1939)-C(5))-methyltransferase RlmD"/>
    <property type="match status" value="1"/>
</dbReference>
<dbReference type="FunFam" id="2.40.50.140:FF:000097">
    <property type="entry name" value="23S rRNA (uracil(1939)-C(5))-methyltransferase RlmD"/>
    <property type="match status" value="1"/>
</dbReference>
<dbReference type="Gene3D" id="2.40.50.1070">
    <property type="match status" value="1"/>
</dbReference>
<dbReference type="Gene3D" id="2.40.50.140">
    <property type="entry name" value="Nucleic acid-binding proteins"/>
    <property type="match status" value="1"/>
</dbReference>
<dbReference type="Gene3D" id="3.40.50.150">
    <property type="entry name" value="Vaccinia Virus protein VP39"/>
    <property type="match status" value="1"/>
</dbReference>
<dbReference type="HAMAP" id="MF_01010">
    <property type="entry name" value="23SrRNA_methyltr_RlmD"/>
    <property type="match status" value="1"/>
</dbReference>
<dbReference type="InterPro" id="IPR001566">
    <property type="entry name" value="23S_rRNA_MeTrfase_RlmD"/>
</dbReference>
<dbReference type="InterPro" id="IPR030390">
    <property type="entry name" value="MeTrfase_TrmA_AS"/>
</dbReference>
<dbReference type="InterPro" id="IPR030391">
    <property type="entry name" value="MeTrfase_TrmA_CS"/>
</dbReference>
<dbReference type="InterPro" id="IPR012340">
    <property type="entry name" value="NA-bd_OB-fold"/>
</dbReference>
<dbReference type="InterPro" id="IPR029063">
    <property type="entry name" value="SAM-dependent_MTases_sf"/>
</dbReference>
<dbReference type="InterPro" id="IPR002792">
    <property type="entry name" value="TRAM_dom"/>
</dbReference>
<dbReference type="InterPro" id="IPR010280">
    <property type="entry name" value="U5_MeTrfase_fam"/>
</dbReference>
<dbReference type="NCBIfam" id="NF009639">
    <property type="entry name" value="PRK13168.1"/>
    <property type="match status" value="1"/>
</dbReference>
<dbReference type="NCBIfam" id="TIGR00479">
    <property type="entry name" value="rumA"/>
    <property type="match status" value="1"/>
</dbReference>
<dbReference type="PANTHER" id="PTHR11061:SF49">
    <property type="entry name" value="23S RRNA (URACIL(1939)-C(5))-METHYLTRANSFERASE RLMD"/>
    <property type="match status" value="1"/>
</dbReference>
<dbReference type="PANTHER" id="PTHR11061">
    <property type="entry name" value="RNA M5U METHYLTRANSFERASE"/>
    <property type="match status" value="1"/>
</dbReference>
<dbReference type="Pfam" id="PF01938">
    <property type="entry name" value="TRAM"/>
    <property type="match status" value="1"/>
</dbReference>
<dbReference type="Pfam" id="PF05958">
    <property type="entry name" value="tRNA_U5-meth_tr"/>
    <property type="match status" value="1"/>
</dbReference>
<dbReference type="SUPFAM" id="SSF50249">
    <property type="entry name" value="Nucleic acid-binding proteins"/>
    <property type="match status" value="1"/>
</dbReference>
<dbReference type="SUPFAM" id="SSF53335">
    <property type="entry name" value="S-adenosyl-L-methionine-dependent methyltransferases"/>
    <property type="match status" value="1"/>
</dbReference>
<dbReference type="PROSITE" id="PS51687">
    <property type="entry name" value="SAM_MT_RNA_M5U"/>
    <property type="match status" value="1"/>
</dbReference>
<dbReference type="PROSITE" id="PS50926">
    <property type="entry name" value="TRAM"/>
    <property type="match status" value="1"/>
</dbReference>
<dbReference type="PROSITE" id="PS01230">
    <property type="entry name" value="TRMA_1"/>
    <property type="match status" value="1"/>
</dbReference>
<dbReference type="PROSITE" id="PS01231">
    <property type="entry name" value="TRMA_2"/>
    <property type="match status" value="1"/>
</dbReference>